<feature type="chain" id="PRO_0000147562" description="Tetrahydromethanopterin S-methyltransferase subunit H">
    <location>
        <begin position="1"/>
        <end position="316"/>
    </location>
</feature>
<proteinExistence type="inferred from homology"/>
<dbReference type="EC" id="7.2.1.4" evidence="1"/>
<dbReference type="EMBL" id="AJ132817">
    <property type="protein sequence ID" value="CAA10790.1"/>
    <property type="molecule type" value="Genomic_DNA"/>
</dbReference>
<dbReference type="EMBL" id="CP000099">
    <property type="protein sequence ID" value="AAZ70218.1"/>
    <property type="molecule type" value="Genomic_DNA"/>
</dbReference>
<dbReference type="SMR" id="O93716"/>
<dbReference type="STRING" id="269797.Mbar_A1255"/>
<dbReference type="PaxDb" id="269797-Mbar_A1255"/>
<dbReference type="GeneID" id="24825093"/>
<dbReference type="KEGG" id="mba:Mbar_A1255"/>
<dbReference type="eggNOG" id="arCOG04336">
    <property type="taxonomic scope" value="Archaea"/>
</dbReference>
<dbReference type="HOGENOM" id="CLU_048697_0_0_2"/>
<dbReference type="OrthoDB" id="18811at2157"/>
<dbReference type="UniPathway" id="UPA00640">
    <property type="reaction ID" value="UER00698"/>
</dbReference>
<dbReference type="GO" id="GO:0030269">
    <property type="term" value="F:tetrahydromethanopterin S-methyltransferase activity"/>
    <property type="evidence" value="ECO:0007669"/>
    <property type="project" value="UniProtKB-UniRule"/>
</dbReference>
<dbReference type="GO" id="GO:0019386">
    <property type="term" value="P:methanogenesis, from carbon dioxide"/>
    <property type="evidence" value="ECO:0007669"/>
    <property type="project" value="UniProtKB-UniRule"/>
</dbReference>
<dbReference type="GO" id="GO:0032259">
    <property type="term" value="P:methylation"/>
    <property type="evidence" value="ECO:0007669"/>
    <property type="project" value="UniProtKB-KW"/>
</dbReference>
<dbReference type="GO" id="GO:0006730">
    <property type="term" value="P:one-carbon metabolic process"/>
    <property type="evidence" value="ECO:0007669"/>
    <property type="project" value="UniProtKB-UniRule"/>
</dbReference>
<dbReference type="HAMAP" id="MF_01501">
    <property type="entry name" value="MtrH"/>
    <property type="match status" value="1"/>
</dbReference>
<dbReference type="InterPro" id="IPR011005">
    <property type="entry name" value="Dihydropteroate_synth-like_sf"/>
</dbReference>
<dbReference type="InterPro" id="IPR023467">
    <property type="entry name" value="MeTrfase_MtrH/MtxH"/>
</dbReference>
<dbReference type="InterPro" id="IPR028342">
    <property type="entry name" value="MtrH"/>
</dbReference>
<dbReference type="NCBIfam" id="TIGR01114">
    <property type="entry name" value="mtrH"/>
    <property type="match status" value="1"/>
</dbReference>
<dbReference type="Pfam" id="PF02007">
    <property type="entry name" value="MtrH"/>
    <property type="match status" value="1"/>
</dbReference>
<dbReference type="PIRSF" id="PIRSF500206">
    <property type="entry name" value="MtrH"/>
    <property type="match status" value="1"/>
</dbReference>
<dbReference type="PIRSF" id="PIRSF004960">
    <property type="entry name" value="MtrH_MtxH"/>
    <property type="match status" value="1"/>
</dbReference>
<dbReference type="SUPFAM" id="SSF51717">
    <property type="entry name" value="Dihydropteroate synthetase-like"/>
    <property type="match status" value="1"/>
</dbReference>
<keyword id="KW-0484">Methanogenesis</keyword>
<keyword id="KW-0489">Methyltransferase</keyword>
<keyword id="KW-0554">One-carbon metabolism</keyword>
<keyword id="KW-0808">Transferase</keyword>
<keyword id="KW-1278">Translocase</keyword>
<evidence type="ECO:0000255" key="1">
    <source>
        <dbReference type="HAMAP-Rule" id="MF_01501"/>
    </source>
</evidence>
<organism>
    <name type="scientific">Methanosarcina barkeri (strain Fusaro / DSM 804)</name>
    <dbReference type="NCBI Taxonomy" id="269797"/>
    <lineage>
        <taxon>Archaea</taxon>
        <taxon>Methanobacteriati</taxon>
        <taxon>Methanobacteriota</taxon>
        <taxon>Stenosarchaea group</taxon>
        <taxon>Methanomicrobia</taxon>
        <taxon>Methanosarcinales</taxon>
        <taxon>Methanosarcinaceae</taxon>
        <taxon>Methanosarcina</taxon>
    </lineage>
</organism>
<comment type="function">
    <text evidence="1">Part of a complex that catalyzes the formation of methyl-coenzyme M and tetrahydromethanopterin from coenzyme M and methyl-tetrahydromethanopterin. This is an energy-conserving, sodium-ion translocating step. MtrH catalyzes the transfer of the methyl group from methyl-tetrahydromethanopterin to the corrinoid prosthetic group of MtrA.</text>
</comment>
<comment type="catalytic activity">
    <reaction evidence="1">
        <text>5-methyl-5,6,7,8-tetrahydromethanopterin + coenzyme M + 2 Na(+)(in) = 5,6,7,8-tetrahydromethanopterin + methyl-coenzyme M + 2 Na(+)(out)</text>
        <dbReference type="Rhea" id="RHEA:53492"/>
        <dbReference type="ChEBI" id="CHEBI:29101"/>
        <dbReference type="ChEBI" id="CHEBI:58103"/>
        <dbReference type="ChEBI" id="CHEBI:58116"/>
        <dbReference type="ChEBI" id="CHEBI:58286"/>
        <dbReference type="ChEBI" id="CHEBI:58319"/>
        <dbReference type="EC" id="7.2.1.4"/>
    </reaction>
</comment>
<comment type="pathway">
    <text evidence="1">One-carbon metabolism; methanogenesis from CO(2); methyl-coenzyme M from 5,10-methylene-5,6,7,8-tetrahydromethanopterin: step 2/2.</text>
</comment>
<comment type="subunit">
    <text evidence="1">The complex is composed of 8 subunits; MtrA, MtrB, MtrC, MtrD, MtrE, MtrF, MtrG and MtrH.</text>
</comment>
<comment type="similarity">
    <text evidence="1">Belongs to the MtrH family.</text>
</comment>
<gene>
    <name evidence="1" type="primary">mtrH</name>
    <name type="ordered locus">Mbar_A1255</name>
</gene>
<protein>
    <recommendedName>
        <fullName evidence="1">Tetrahydromethanopterin S-methyltransferase subunit H</fullName>
        <ecNumber evidence="1">7.2.1.4</ecNumber>
    </recommendedName>
    <alternativeName>
        <fullName evidence="1">N5-methyltetrahydromethanopterin--coenzyme M methyltransferase subunit H</fullName>
    </alternativeName>
</protein>
<name>MTRH_METBF</name>
<reference key="1">
    <citation type="journal article" date="1999" name="FEBS Lett.">
        <title>The energy conserving methyltetrahydromethanopterin:coenzyme M methyltransferase complex from methanogenic archaea: function of the subunit MtrH.</title>
        <authorList>
            <person name="Hippler B."/>
            <person name="Thauer R.K."/>
        </authorList>
    </citation>
    <scope>NUCLEOTIDE SEQUENCE [GENOMIC DNA]</scope>
</reference>
<reference key="2">
    <citation type="journal article" date="2006" name="J. Bacteriol.">
        <title>The Methanosarcina barkeri genome: comparative analysis with Methanosarcina acetivorans and Methanosarcina mazei reveals extensive rearrangement within methanosarcinal genomes.</title>
        <authorList>
            <person name="Maeder D.L."/>
            <person name="Anderson I."/>
            <person name="Brettin T.S."/>
            <person name="Bruce D.C."/>
            <person name="Gilna P."/>
            <person name="Han C.S."/>
            <person name="Lapidus A."/>
            <person name="Metcalf W.W."/>
            <person name="Saunders E."/>
            <person name="Tapia R."/>
            <person name="Sowers K.R."/>
        </authorList>
    </citation>
    <scope>NUCLEOTIDE SEQUENCE [LARGE SCALE GENOMIC DNA]</scope>
    <source>
        <strain>Fusaro / DSM 804</strain>
    </source>
</reference>
<accession>O93716</accession>
<accession>Q46D24</accession>
<sequence>MFKFDKKQEVFEIGGVKFGGQPGEFPTVLVSTMFYARHKIVTDEDKGIFDRAAAETLWNTQVSLSDATGNPYVNQIVGETPESIKRYIDWFVEIDDRTPFLIDSSAGNVRAAAAQYCTEIGVADRAIHNSINASIEQEEIDVLTESDVEAAIVLAFNATDPTVKGKMDILEVGGSGLTKGMLQISEECGIKYPLIDVAAMPLGAGSGPTIRSIPTMKAKFGLPIGGGYHNMASAWDWLRKFKKTQPDAKAIYMPADIGTNLVAQIAGSDYLLYGPIENVNQIFPAVAMVDIMLGETAKDLGVEIADLENHPVTKLT</sequence>